<keyword id="KW-0270">Exopolysaccharide synthesis</keyword>
<keyword id="KW-0536">Nodulation</keyword>
<comment type="similarity">
    <text evidence="1">Belongs to the inositol monophosphatase superfamily.</text>
</comment>
<comment type="sequence caution" evidence="1">
    <conflict type="erroneous initiation">
        <sequence resource="EMBL-CDS" id="CAA31078"/>
    </conflict>
</comment>
<accession>P10497</accession>
<sequence length="95" mass="10149">SFLADHAIFKCTNIGSSLKFCLLAEGKADVYPRFTRTMEWDTAAGDAVLRAAGGSTVTLDGTPLTYGKTGTAADFDFANPNFISWGGRKRVLEPA</sequence>
<reference key="1">
    <citation type="journal article" date="1988" name="Mol. Gen. Genet.">
        <title>Analysis of pss genes of Rhizobium leguminosarum required for exopolysaccharide synthesis and nodulation of peas: their primary structure and their interaction with psi and other nodulation genes.</title>
        <authorList>
            <person name="Borthakur D."/>
            <person name="Barker R.F."/>
            <person name="Latchford J.W."/>
            <person name="Rossen L."/>
            <person name="Johnston A.W.B."/>
        </authorList>
    </citation>
    <scope>NUCLEOTIDE SEQUENCE [GENOMIC DNA]</scope>
    <source>
        <strain>8002</strain>
    </source>
</reference>
<organism>
    <name type="scientific">Rhizobium leguminosarum bv. phaseoli</name>
    <dbReference type="NCBI Taxonomy" id="385"/>
    <lineage>
        <taxon>Bacteria</taxon>
        <taxon>Pseudomonadati</taxon>
        <taxon>Pseudomonadota</taxon>
        <taxon>Alphaproteobacteria</taxon>
        <taxon>Hyphomicrobiales</taxon>
        <taxon>Rhizobiaceae</taxon>
        <taxon>Rhizobium/Agrobacterium group</taxon>
        <taxon>Rhizobium</taxon>
    </lineage>
</organism>
<protein>
    <recommendedName>
        <fullName>Uncharacterized protein in pss 5'region</fullName>
    </recommendedName>
</protein>
<evidence type="ECO:0000305" key="1"/>
<proteinExistence type="inferred from homology"/>
<name>YPSS_RHILP</name>
<feature type="chain" id="PRO_0000142582" description="Uncharacterized protein in pss 5'region">
    <location>
        <begin position="1" status="less than"/>
        <end position="95"/>
    </location>
</feature>
<feature type="non-terminal residue">
    <location>
        <position position="1"/>
    </location>
</feature>
<dbReference type="EMBL" id="X12568">
    <property type="protein sequence ID" value="CAA31078.1"/>
    <property type="status" value="ALT_INIT"/>
    <property type="molecule type" value="Genomic_DNA"/>
</dbReference>
<dbReference type="SMR" id="P10497"/>
<dbReference type="GO" id="GO:0008441">
    <property type="term" value="F:3'(2'),5'-bisphosphate nucleotidase activity"/>
    <property type="evidence" value="ECO:0007669"/>
    <property type="project" value="TreeGrafter"/>
</dbReference>
<dbReference type="GO" id="GO:0050427">
    <property type="term" value="P:3'-phosphoadenosine 5'-phosphosulfate metabolic process"/>
    <property type="evidence" value="ECO:0007669"/>
    <property type="project" value="TreeGrafter"/>
</dbReference>
<dbReference type="GO" id="GO:0046854">
    <property type="term" value="P:phosphatidylinositol phosphate biosynthetic process"/>
    <property type="evidence" value="ECO:0007669"/>
    <property type="project" value="InterPro"/>
</dbReference>
<dbReference type="GO" id="GO:0000271">
    <property type="term" value="P:polysaccharide biosynthetic process"/>
    <property type="evidence" value="ECO:0007669"/>
    <property type="project" value="UniProtKB-KW"/>
</dbReference>
<dbReference type="GO" id="GO:0000103">
    <property type="term" value="P:sulfate assimilation"/>
    <property type="evidence" value="ECO:0007669"/>
    <property type="project" value="TreeGrafter"/>
</dbReference>
<dbReference type="Gene3D" id="3.40.190.80">
    <property type="match status" value="1"/>
</dbReference>
<dbReference type="InterPro" id="IPR050725">
    <property type="entry name" value="CysQ/Inositol_MonoPase"/>
</dbReference>
<dbReference type="InterPro" id="IPR000760">
    <property type="entry name" value="Inositol_monophosphatase-like"/>
</dbReference>
<dbReference type="InterPro" id="IPR020550">
    <property type="entry name" value="Inositol_monophosphatase_CS"/>
</dbReference>
<dbReference type="PANTHER" id="PTHR43028">
    <property type="entry name" value="3'(2'),5'-BISPHOSPHATE NUCLEOTIDASE 1"/>
    <property type="match status" value="1"/>
</dbReference>
<dbReference type="PANTHER" id="PTHR43028:SF5">
    <property type="entry name" value="3'(2'),5'-BISPHOSPHATE NUCLEOTIDASE 1"/>
    <property type="match status" value="1"/>
</dbReference>
<dbReference type="Pfam" id="PF00459">
    <property type="entry name" value="Inositol_P"/>
    <property type="match status" value="1"/>
</dbReference>
<dbReference type="SUPFAM" id="SSF56655">
    <property type="entry name" value="Carbohydrate phosphatase"/>
    <property type="match status" value="1"/>
</dbReference>
<dbReference type="PROSITE" id="PS00630">
    <property type="entry name" value="IMP_2"/>
    <property type="match status" value="1"/>
</dbReference>